<accession>Q59032</accession>
<sequence length="260" mass="30016">MNFEKIIEEKVNQKLKELRLKNSLEILEKLDINTELKEALKSTLLKRLNGEKEFYKISIDKKPKAVVAFSGGVDSSTSAIIAKQIFDVKAVSCYSKYIMTDEMRENAKNIAKKIGISLEFVSIDLEEVYKGVVNGKFHPCGRCHKVIENAVIDYAKKIDAEFVIFGDLLAFGYLALYREDEIFRFNLPSFFALTKDEEREILKNNGIELKMSYGCPLLKIYHKHNKGYKFTIQRILREVRGRVVNEEEGFKNIVEILNQQ</sequence>
<organism>
    <name type="scientific">Methanocaldococcus jannaschii (strain ATCC 43067 / DSM 2661 / JAL-1 / JCM 10045 / NBRC 100440)</name>
    <name type="common">Methanococcus jannaschii</name>
    <dbReference type="NCBI Taxonomy" id="243232"/>
    <lineage>
        <taxon>Archaea</taxon>
        <taxon>Methanobacteriati</taxon>
        <taxon>Methanobacteriota</taxon>
        <taxon>Methanomada group</taxon>
        <taxon>Methanococci</taxon>
        <taxon>Methanococcales</taxon>
        <taxon>Methanocaldococcaceae</taxon>
        <taxon>Methanocaldococcus</taxon>
    </lineage>
</organism>
<protein>
    <recommendedName>
        <fullName>Uncharacterized protein MJ1638</fullName>
    </recommendedName>
</protein>
<name>Y1638_METJA</name>
<gene>
    <name type="ordered locus">MJ1638</name>
</gene>
<dbReference type="EMBL" id="L77117">
    <property type="protein sequence ID" value="AAB99659.1"/>
    <property type="molecule type" value="Genomic_DNA"/>
</dbReference>
<dbReference type="PIR" id="D64504">
    <property type="entry name" value="D64504"/>
</dbReference>
<dbReference type="RefSeq" id="WP_010871162.1">
    <property type="nucleotide sequence ID" value="NC_000909.1"/>
</dbReference>
<dbReference type="SMR" id="Q59032"/>
<dbReference type="STRING" id="243232.MJ_1638"/>
<dbReference type="PaxDb" id="243232-MJ_1638"/>
<dbReference type="EnsemblBacteria" id="AAB99659">
    <property type="protein sequence ID" value="AAB99659"/>
    <property type="gene ID" value="MJ_1638"/>
</dbReference>
<dbReference type="GeneID" id="1452547"/>
<dbReference type="KEGG" id="mja:MJ_1638"/>
<dbReference type="eggNOG" id="arCOG00045">
    <property type="taxonomic scope" value="Archaea"/>
</dbReference>
<dbReference type="HOGENOM" id="CLU_077587_0_0_2"/>
<dbReference type="InParanoid" id="Q59032"/>
<dbReference type="OrthoDB" id="85793at2157"/>
<dbReference type="PhylomeDB" id="Q59032"/>
<dbReference type="Proteomes" id="UP000000805">
    <property type="component" value="Chromosome"/>
</dbReference>
<dbReference type="Gene3D" id="3.40.50.620">
    <property type="entry name" value="HUPs"/>
    <property type="match status" value="1"/>
</dbReference>
<dbReference type="InterPro" id="IPR012096">
    <property type="entry name" value="ATPase_PP-loop_MJ1638"/>
</dbReference>
<dbReference type="InterPro" id="IPR055834">
    <property type="entry name" value="DUF7411"/>
</dbReference>
<dbReference type="InterPro" id="IPR052188">
    <property type="entry name" value="Ni-pincer_cofactor_biosynth"/>
</dbReference>
<dbReference type="InterPro" id="IPR014729">
    <property type="entry name" value="Rossmann-like_a/b/a_fold"/>
</dbReference>
<dbReference type="PANTHER" id="PTHR43169:SF1">
    <property type="entry name" value="ATPASE, PP-LOOP SUPERFAMILY-RELATED"/>
    <property type="match status" value="1"/>
</dbReference>
<dbReference type="PANTHER" id="PTHR43169">
    <property type="entry name" value="EXSB FAMILY PROTEIN"/>
    <property type="match status" value="1"/>
</dbReference>
<dbReference type="Pfam" id="PF24167">
    <property type="entry name" value="DUF7411"/>
    <property type="match status" value="1"/>
</dbReference>
<dbReference type="PIRSF" id="PIRSF006601">
    <property type="entry name" value="ATPase_UCP006601"/>
    <property type="match status" value="1"/>
</dbReference>
<dbReference type="SUPFAM" id="SSF52402">
    <property type="entry name" value="Adenine nucleotide alpha hydrolases-like"/>
    <property type="match status" value="1"/>
</dbReference>
<keyword id="KW-1185">Reference proteome</keyword>
<reference key="1">
    <citation type="journal article" date="1996" name="Science">
        <title>Complete genome sequence of the methanogenic archaeon, Methanococcus jannaschii.</title>
        <authorList>
            <person name="Bult C.J."/>
            <person name="White O."/>
            <person name="Olsen G.J."/>
            <person name="Zhou L."/>
            <person name="Fleischmann R.D."/>
            <person name="Sutton G.G."/>
            <person name="Blake J.A."/>
            <person name="FitzGerald L.M."/>
            <person name="Clayton R.A."/>
            <person name="Gocayne J.D."/>
            <person name="Kerlavage A.R."/>
            <person name="Dougherty B.A."/>
            <person name="Tomb J.-F."/>
            <person name="Adams M.D."/>
            <person name="Reich C.I."/>
            <person name="Overbeek R."/>
            <person name="Kirkness E.F."/>
            <person name="Weinstock K.G."/>
            <person name="Merrick J.M."/>
            <person name="Glodek A."/>
            <person name="Scott J.L."/>
            <person name="Geoghagen N.S.M."/>
            <person name="Weidman J.F."/>
            <person name="Fuhrmann J.L."/>
            <person name="Nguyen D."/>
            <person name="Utterback T.R."/>
            <person name="Kelley J.M."/>
            <person name="Peterson J.D."/>
            <person name="Sadow P.W."/>
            <person name="Hanna M.C."/>
            <person name="Cotton M.D."/>
            <person name="Roberts K.M."/>
            <person name="Hurst M.A."/>
            <person name="Kaine B.P."/>
            <person name="Borodovsky M."/>
            <person name="Klenk H.-P."/>
            <person name="Fraser C.M."/>
            <person name="Smith H.O."/>
            <person name="Woese C.R."/>
            <person name="Venter J.C."/>
        </authorList>
    </citation>
    <scope>NUCLEOTIDE SEQUENCE [LARGE SCALE GENOMIC DNA]</scope>
    <source>
        <strain>ATCC 43067 / DSM 2661 / JAL-1 / JCM 10045 / NBRC 100440</strain>
    </source>
</reference>
<proteinExistence type="predicted"/>
<feature type="chain" id="PRO_0000107452" description="Uncharacterized protein MJ1638">
    <location>
        <begin position="1"/>
        <end position="260"/>
    </location>
</feature>